<reference key="1">
    <citation type="journal article" date="2007" name="Genome Res.">
        <title>Genome sequence of a proteolytic (Group I) Clostridium botulinum strain Hall A and comparative analysis of the clostridial genomes.</title>
        <authorList>
            <person name="Sebaihia M."/>
            <person name="Peck M.W."/>
            <person name="Minton N.P."/>
            <person name="Thomson N.R."/>
            <person name="Holden M.T.G."/>
            <person name="Mitchell W.J."/>
            <person name="Carter A.T."/>
            <person name="Bentley S.D."/>
            <person name="Mason D.R."/>
            <person name="Crossman L."/>
            <person name="Paul C.J."/>
            <person name="Ivens A."/>
            <person name="Wells-Bennik M.H.J."/>
            <person name="Davis I.J."/>
            <person name="Cerdeno-Tarraga A.M."/>
            <person name="Churcher C."/>
            <person name="Quail M.A."/>
            <person name="Chillingworth T."/>
            <person name="Feltwell T."/>
            <person name="Fraser A."/>
            <person name="Goodhead I."/>
            <person name="Hance Z."/>
            <person name="Jagels K."/>
            <person name="Larke N."/>
            <person name="Maddison M."/>
            <person name="Moule S."/>
            <person name="Mungall K."/>
            <person name="Norbertczak H."/>
            <person name="Rabbinowitsch E."/>
            <person name="Sanders M."/>
            <person name="Simmonds M."/>
            <person name="White B."/>
            <person name="Whithead S."/>
            <person name="Parkhill J."/>
        </authorList>
    </citation>
    <scope>NUCLEOTIDE SEQUENCE [LARGE SCALE GENOMIC DNA]</scope>
    <source>
        <strain>Hall / ATCC 3502 / NCTC 13319 / Type A</strain>
    </source>
</reference>
<reference key="2">
    <citation type="journal article" date="2007" name="PLoS ONE">
        <title>Analysis of the neurotoxin complex genes in Clostridium botulinum A1-A4 and B1 strains: BoNT/A3, /Ba4 and /B1 clusters are located within plasmids.</title>
        <authorList>
            <person name="Smith T.J."/>
            <person name="Hill K.K."/>
            <person name="Foley B.T."/>
            <person name="Detter J.C."/>
            <person name="Munk A.C."/>
            <person name="Bruce D.C."/>
            <person name="Doggett N.A."/>
            <person name="Smith L.A."/>
            <person name="Marks J.D."/>
            <person name="Xie G."/>
            <person name="Brettin T.S."/>
        </authorList>
    </citation>
    <scope>NUCLEOTIDE SEQUENCE [LARGE SCALE GENOMIC DNA]</scope>
    <source>
        <strain>Hall / ATCC 3502 / NCTC 13319 / Type A</strain>
    </source>
</reference>
<sequence length="306" mass="33648">MNQYKNFIMQFEDIVGNNNVLIDEPMKKHTSFKVGGPADLLITPTTLEQVKDSIILCRNNSIPYYIIGNGSNLLVRDGGIRGVVIKFLKLGDIKVEGDRVIAQSGAPLTNICNEALKSNLGGLEFACGIPGSVGGAVTMNAGAYNGEISQVIESAKVIDKDGNVFLLNKEQLDLGYRMSAIQKYHYIVLEVTFKLHNSEYDTIKNRIMDLNRRRTEKQPLEYPSAGSTFKRPEGHFAAKLIEDTGLKGESIGGAQVSEKHSGFIINKGGATAGDILNLIEFVQNKVMEKFEVDLHTEVRIIGEENN</sequence>
<proteinExistence type="inferred from homology"/>
<accession>A5I7A3</accession>
<accession>A7G8I6</accession>
<feature type="chain" id="PRO_1000002879" description="UDP-N-acetylenolpyruvoylglucosamine reductase">
    <location>
        <begin position="1"/>
        <end position="306"/>
    </location>
</feature>
<feature type="domain" description="FAD-binding PCMH-type" evidence="1">
    <location>
        <begin position="34"/>
        <end position="198"/>
    </location>
</feature>
<feature type="active site" evidence="1">
    <location>
        <position position="177"/>
    </location>
</feature>
<feature type="active site" description="Proton donor" evidence="1">
    <location>
        <position position="227"/>
    </location>
</feature>
<feature type="active site" evidence="1">
    <location>
        <position position="297"/>
    </location>
</feature>
<name>MURB_CLOBH</name>
<organism>
    <name type="scientific">Clostridium botulinum (strain Hall / ATCC 3502 / NCTC 13319 / Type A)</name>
    <dbReference type="NCBI Taxonomy" id="441771"/>
    <lineage>
        <taxon>Bacteria</taxon>
        <taxon>Bacillati</taxon>
        <taxon>Bacillota</taxon>
        <taxon>Clostridia</taxon>
        <taxon>Eubacteriales</taxon>
        <taxon>Clostridiaceae</taxon>
        <taxon>Clostridium</taxon>
    </lineage>
</organism>
<protein>
    <recommendedName>
        <fullName evidence="1">UDP-N-acetylenolpyruvoylglucosamine reductase</fullName>
        <ecNumber evidence="1">1.3.1.98</ecNumber>
    </recommendedName>
    <alternativeName>
        <fullName evidence="1">UDP-N-acetylmuramate dehydrogenase</fullName>
    </alternativeName>
</protein>
<evidence type="ECO:0000255" key="1">
    <source>
        <dbReference type="HAMAP-Rule" id="MF_00037"/>
    </source>
</evidence>
<dbReference type="EC" id="1.3.1.98" evidence="1"/>
<dbReference type="EMBL" id="CP000727">
    <property type="protein sequence ID" value="ABS36188.1"/>
    <property type="molecule type" value="Genomic_DNA"/>
</dbReference>
<dbReference type="EMBL" id="AM412317">
    <property type="protein sequence ID" value="CAL84937.1"/>
    <property type="molecule type" value="Genomic_DNA"/>
</dbReference>
<dbReference type="RefSeq" id="WP_012048307.1">
    <property type="nucleotide sequence ID" value="NC_009698.1"/>
</dbReference>
<dbReference type="RefSeq" id="YP_001255860.1">
    <property type="nucleotide sequence ID" value="NC_009495.1"/>
</dbReference>
<dbReference type="RefSeq" id="YP_001389101.1">
    <property type="nucleotide sequence ID" value="NC_009698.1"/>
</dbReference>
<dbReference type="SMR" id="A5I7A3"/>
<dbReference type="GeneID" id="5187158"/>
<dbReference type="KEGG" id="cbh:CLC_3321"/>
<dbReference type="KEGG" id="cbo:CBO3378"/>
<dbReference type="PATRIC" id="fig|413999.7.peg.3352"/>
<dbReference type="HOGENOM" id="CLU_035304_1_1_9"/>
<dbReference type="UniPathway" id="UPA00219"/>
<dbReference type="PRO" id="PR:A5I7A3"/>
<dbReference type="Proteomes" id="UP000001986">
    <property type="component" value="Chromosome"/>
</dbReference>
<dbReference type="GO" id="GO:0005829">
    <property type="term" value="C:cytosol"/>
    <property type="evidence" value="ECO:0000318"/>
    <property type="project" value="GO_Central"/>
</dbReference>
<dbReference type="GO" id="GO:0071949">
    <property type="term" value="F:FAD binding"/>
    <property type="evidence" value="ECO:0007669"/>
    <property type="project" value="InterPro"/>
</dbReference>
<dbReference type="GO" id="GO:0050660">
    <property type="term" value="F:flavin adenine dinucleotide binding"/>
    <property type="evidence" value="ECO:0000318"/>
    <property type="project" value="GO_Central"/>
</dbReference>
<dbReference type="GO" id="GO:0008762">
    <property type="term" value="F:UDP-N-acetylmuramate dehydrogenase activity"/>
    <property type="evidence" value="ECO:0000318"/>
    <property type="project" value="GO_Central"/>
</dbReference>
<dbReference type="GO" id="GO:0051301">
    <property type="term" value="P:cell division"/>
    <property type="evidence" value="ECO:0007669"/>
    <property type="project" value="UniProtKB-KW"/>
</dbReference>
<dbReference type="GO" id="GO:0071555">
    <property type="term" value="P:cell wall organization"/>
    <property type="evidence" value="ECO:0000318"/>
    <property type="project" value="GO_Central"/>
</dbReference>
<dbReference type="GO" id="GO:0009252">
    <property type="term" value="P:peptidoglycan biosynthetic process"/>
    <property type="evidence" value="ECO:0007669"/>
    <property type="project" value="UniProtKB-UniRule"/>
</dbReference>
<dbReference type="GO" id="GO:0008360">
    <property type="term" value="P:regulation of cell shape"/>
    <property type="evidence" value="ECO:0007669"/>
    <property type="project" value="UniProtKB-KW"/>
</dbReference>
<dbReference type="Gene3D" id="3.30.465.10">
    <property type="match status" value="1"/>
</dbReference>
<dbReference type="Gene3D" id="3.90.78.10">
    <property type="entry name" value="UDP-N-acetylenolpyruvoylglucosamine reductase, C-terminal domain"/>
    <property type="match status" value="1"/>
</dbReference>
<dbReference type="Gene3D" id="3.30.43.10">
    <property type="entry name" value="Uridine Diphospho-n-acetylenolpyruvylglucosamine Reductase, domain 2"/>
    <property type="match status" value="1"/>
</dbReference>
<dbReference type="HAMAP" id="MF_00037">
    <property type="entry name" value="MurB"/>
    <property type="match status" value="1"/>
</dbReference>
<dbReference type="InterPro" id="IPR016166">
    <property type="entry name" value="FAD-bd_PCMH"/>
</dbReference>
<dbReference type="InterPro" id="IPR036318">
    <property type="entry name" value="FAD-bd_PCMH-like_sf"/>
</dbReference>
<dbReference type="InterPro" id="IPR016167">
    <property type="entry name" value="FAD-bd_PCMH_sub1"/>
</dbReference>
<dbReference type="InterPro" id="IPR016169">
    <property type="entry name" value="FAD-bd_PCMH_sub2"/>
</dbReference>
<dbReference type="InterPro" id="IPR003170">
    <property type="entry name" value="MurB"/>
</dbReference>
<dbReference type="InterPro" id="IPR011601">
    <property type="entry name" value="MurB_C"/>
</dbReference>
<dbReference type="InterPro" id="IPR036635">
    <property type="entry name" value="MurB_C_sf"/>
</dbReference>
<dbReference type="InterPro" id="IPR006094">
    <property type="entry name" value="Oxid_FAD_bind_N"/>
</dbReference>
<dbReference type="NCBIfam" id="TIGR00179">
    <property type="entry name" value="murB"/>
    <property type="match status" value="1"/>
</dbReference>
<dbReference type="NCBIfam" id="NF010480">
    <property type="entry name" value="PRK13905.1"/>
    <property type="match status" value="1"/>
</dbReference>
<dbReference type="PANTHER" id="PTHR21071">
    <property type="entry name" value="UDP-N-ACETYLENOLPYRUVOYLGLUCOSAMINE REDUCTASE"/>
    <property type="match status" value="1"/>
</dbReference>
<dbReference type="PANTHER" id="PTHR21071:SF4">
    <property type="entry name" value="UDP-N-ACETYLENOLPYRUVOYLGLUCOSAMINE REDUCTASE"/>
    <property type="match status" value="1"/>
</dbReference>
<dbReference type="Pfam" id="PF01565">
    <property type="entry name" value="FAD_binding_4"/>
    <property type="match status" value="1"/>
</dbReference>
<dbReference type="Pfam" id="PF02873">
    <property type="entry name" value="MurB_C"/>
    <property type="match status" value="1"/>
</dbReference>
<dbReference type="SUPFAM" id="SSF56176">
    <property type="entry name" value="FAD-binding/transporter-associated domain-like"/>
    <property type="match status" value="1"/>
</dbReference>
<dbReference type="SUPFAM" id="SSF56194">
    <property type="entry name" value="Uridine diphospho-N-Acetylenolpyruvylglucosamine reductase, MurB, C-terminal domain"/>
    <property type="match status" value="1"/>
</dbReference>
<dbReference type="PROSITE" id="PS51387">
    <property type="entry name" value="FAD_PCMH"/>
    <property type="match status" value="1"/>
</dbReference>
<gene>
    <name evidence="1" type="primary">murB</name>
    <name type="ordered locus">CBO3378</name>
    <name type="ordered locus">CLC_3321</name>
</gene>
<comment type="function">
    <text evidence="1">Cell wall formation.</text>
</comment>
<comment type="catalytic activity">
    <reaction evidence="1">
        <text>UDP-N-acetyl-alpha-D-muramate + NADP(+) = UDP-N-acetyl-3-O-(1-carboxyvinyl)-alpha-D-glucosamine + NADPH + H(+)</text>
        <dbReference type="Rhea" id="RHEA:12248"/>
        <dbReference type="ChEBI" id="CHEBI:15378"/>
        <dbReference type="ChEBI" id="CHEBI:57783"/>
        <dbReference type="ChEBI" id="CHEBI:58349"/>
        <dbReference type="ChEBI" id="CHEBI:68483"/>
        <dbReference type="ChEBI" id="CHEBI:70757"/>
        <dbReference type="EC" id="1.3.1.98"/>
    </reaction>
</comment>
<comment type="cofactor">
    <cofactor evidence="1">
        <name>FAD</name>
        <dbReference type="ChEBI" id="CHEBI:57692"/>
    </cofactor>
</comment>
<comment type="pathway">
    <text evidence="1">Cell wall biogenesis; peptidoglycan biosynthesis.</text>
</comment>
<comment type="subcellular location">
    <subcellularLocation>
        <location evidence="1">Cytoplasm</location>
    </subcellularLocation>
</comment>
<comment type="similarity">
    <text evidence="1">Belongs to the MurB family.</text>
</comment>
<keyword id="KW-0131">Cell cycle</keyword>
<keyword id="KW-0132">Cell division</keyword>
<keyword id="KW-0133">Cell shape</keyword>
<keyword id="KW-0961">Cell wall biogenesis/degradation</keyword>
<keyword id="KW-0963">Cytoplasm</keyword>
<keyword id="KW-0274">FAD</keyword>
<keyword id="KW-0285">Flavoprotein</keyword>
<keyword id="KW-0521">NADP</keyword>
<keyword id="KW-0560">Oxidoreductase</keyword>
<keyword id="KW-0573">Peptidoglycan synthesis</keyword>
<keyword id="KW-1185">Reference proteome</keyword>